<feature type="signal peptide" evidence="1">
    <location>
        <begin position="1"/>
        <end position="24"/>
    </location>
</feature>
<feature type="propeptide" id="PRO_0000027193">
    <location>
        <begin position="25"/>
        <end position="121"/>
    </location>
</feature>
<feature type="chain" id="PRO_0000027194" description="Thermophilic serine proteinase">
    <location>
        <begin position="122"/>
        <end position="401"/>
    </location>
</feature>
<feature type="domain" description="Peptidase S8" evidence="2">
    <location>
        <begin position="133"/>
        <end position="399"/>
    </location>
</feature>
<feature type="active site" description="Charge relay system" evidence="2 3">
    <location>
        <position position="160"/>
    </location>
</feature>
<feature type="active site" description="Charge relay system" evidence="2 3">
    <location>
        <position position="193"/>
    </location>
</feature>
<feature type="active site" description="Charge relay system" evidence="2 3">
    <location>
        <position position="347"/>
    </location>
</feature>
<feature type="binding site" evidence="3">
    <location>
        <position position="126"/>
    </location>
    <ligand>
        <name>Ca(2+)</name>
        <dbReference type="ChEBI" id="CHEBI:29108"/>
        <label>1</label>
    </ligand>
</feature>
<feature type="binding site" evidence="3">
    <location>
        <position position="168"/>
    </location>
    <ligand>
        <name>Ca(2+)</name>
        <dbReference type="ChEBI" id="CHEBI:29108"/>
        <label>3</label>
    </ligand>
</feature>
<feature type="binding site" evidence="3">
    <location>
        <position position="169"/>
    </location>
    <ligand>
        <name>Ca(2+)</name>
        <dbReference type="ChEBI" id="CHEBI:29108"/>
        <label>1</label>
    </ligand>
</feature>
<feature type="binding site" evidence="3">
    <location>
        <position position="171"/>
    </location>
    <ligand>
        <name>Ca(2+)</name>
        <dbReference type="ChEBI" id="CHEBI:29108"/>
        <label>3</label>
    </ligand>
</feature>
<feature type="binding site" evidence="3">
    <location>
        <position position="179"/>
    </location>
    <ligand>
        <name>Ca(2+)</name>
        <dbReference type="ChEBI" id="CHEBI:29108"/>
        <label>2</label>
    </ligand>
</feature>
<feature type="binding site" evidence="3">
    <location>
        <position position="184"/>
    </location>
    <ligand>
        <name>Ca(2+)</name>
        <dbReference type="ChEBI" id="CHEBI:29108"/>
        <label>2</label>
    </ligand>
</feature>
<feature type="binding site" evidence="3">
    <location>
        <position position="186"/>
    </location>
    <ligand>
        <name>Ca(2+)</name>
        <dbReference type="ChEBI" id="CHEBI:29108"/>
        <label>2</label>
    </ligand>
</feature>
<feature type="binding site" evidence="3">
    <location>
        <position position="204"/>
    </location>
    <ligand>
        <name>Ca(2+)</name>
        <dbReference type="ChEBI" id="CHEBI:29108"/>
        <label>1</label>
    </ligand>
</feature>
<feature type="binding site" evidence="3">
    <location>
        <position position="204"/>
    </location>
    <ligand>
        <name>Ca(2+)</name>
        <dbReference type="ChEBI" id="CHEBI:29108"/>
        <label>3</label>
    </ligand>
</feature>
<feature type="binding site" evidence="3">
    <location>
        <position position="207"/>
    </location>
    <ligand>
        <name>Ca(2+)</name>
        <dbReference type="ChEBI" id="CHEBI:29108"/>
        <label>1</label>
    </ligand>
</feature>
<feature type="binding site" evidence="3">
    <location>
        <position position="209"/>
    </location>
    <ligand>
        <name>Ca(2+)</name>
        <dbReference type="ChEBI" id="CHEBI:29108"/>
        <label>1</label>
    </ligand>
</feature>
<feature type="binding site" evidence="3">
    <location>
        <position position="211"/>
    </location>
    <ligand>
        <name>Ca(2+)</name>
        <dbReference type="ChEBI" id="CHEBI:29108"/>
        <label>1</label>
    </ligand>
</feature>
<feature type="binding site" evidence="3">
    <location>
        <position position="297"/>
    </location>
    <ligand>
        <name>Na(+)</name>
        <dbReference type="ChEBI" id="CHEBI:29101"/>
    </ligand>
</feature>
<feature type="binding site" evidence="3">
    <location>
        <position position="300"/>
    </location>
    <ligand>
        <name>Na(+)</name>
        <dbReference type="ChEBI" id="CHEBI:29101"/>
    </ligand>
</feature>
<feature type="binding site" evidence="3">
    <location>
        <position position="323"/>
    </location>
    <ligand>
        <name>Na(+)</name>
        <dbReference type="ChEBI" id="CHEBI:29101"/>
    </ligand>
</feature>
<feature type="disulfide bond">
    <location>
        <begin position="258"/>
        <end position="260"/>
    </location>
</feature>
<feature type="helix" evidence="5">
    <location>
        <begin position="129"/>
        <end position="132"/>
    </location>
</feature>
<feature type="helix" evidence="5">
    <location>
        <begin position="137"/>
        <end position="139"/>
    </location>
</feature>
<feature type="helix" evidence="5">
    <location>
        <begin position="141"/>
        <end position="144"/>
    </location>
</feature>
<feature type="turn" evidence="5">
    <location>
        <begin position="145"/>
        <end position="147"/>
    </location>
</feature>
<feature type="strand" evidence="5">
    <location>
        <begin position="155"/>
        <end position="161"/>
    </location>
</feature>
<feature type="turn" evidence="5">
    <location>
        <begin position="168"/>
        <end position="173"/>
    </location>
</feature>
<feature type="strand" evidence="5">
    <location>
        <begin position="174"/>
        <end position="179"/>
    </location>
</feature>
<feature type="turn" evidence="5">
    <location>
        <begin position="180"/>
        <end position="183"/>
    </location>
</feature>
<feature type="strand" evidence="5">
    <location>
        <begin position="190"/>
        <end position="192"/>
    </location>
</feature>
<feature type="helix" evidence="5">
    <location>
        <begin position="193"/>
        <end position="202"/>
    </location>
</feature>
<feature type="strand" evidence="5">
    <location>
        <begin position="206"/>
        <end position="210"/>
    </location>
</feature>
<feature type="strand" evidence="5">
    <location>
        <begin position="214"/>
        <end position="217"/>
    </location>
</feature>
<feature type="strand" evidence="5">
    <location>
        <begin position="219"/>
        <end position="224"/>
    </location>
</feature>
<feature type="helix" evidence="5">
    <location>
        <begin position="234"/>
        <end position="246"/>
    </location>
</feature>
<feature type="strand" evidence="5">
    <location>
        <begin position="250"/>
        <end position="254"/>
    </location>
</feature>
<feature type="helix" evidence="5">
    <location>
        <begin position="263"/>
        <end position="274"/>
    </location>
</feature>
<feature type="strand" evidence="5">
    <location>
        <begin position="278"/>
        <end position="282"/>
    </location>
</feature>
<feature type="strand" evidence="5">
    <location>
        <begin position="300"/>
        <end position="306"/>
    </location>
</feature>
<feature type="strand" evidence="5">
    <location>
        <begin position="324"/>
        <end position="327"/>
    </location>
</feature>
<feature type="strand" evidence="5">
    <location>
        <begin position="329"/>
        <end position="335"/>
    </location>
</feature>
<feature type="turn" evidence="5">
    <location>
        <begin position="336"/>
        <end position="338"/>
    </location>
</feature>
<feature type="strand" evidence="5">
    <location>
        <begin position="339"/>
        <end position="343"/>
    </location>
</feature>
<feature type="helix" evidence="5">
    <location>
        <begin position="346"/>
        <end position="362"/>
    </location>
</feature>
<feature type="helix" evidence="5">
    <location>
        <begin position="367"/>
        <end position="376"/>
    </location>
</feature>
<feature type="turn" evidence="5">
    <location>
        <begin position="382"/>
        <end position="386"/>
    </location>
</feature>
<feature type="strand" evidence="5">
    <location>
        <begin position="387"/>
        <end position="392"/>
    </location>
</feature>
<feature type="helix" evidence="5">
    <location>
        <begin position="395"/>
        <end position="399"/>
    </location>
</feature>
<sequence length="401" mass="42835">MKFKAIVSLSLAVSMSLFPFLVEAASNDGVESPKTVSEINVSHEKGAYVQGEVIVQFKEQVNAEEKAKALKEVGATAVPDNDRVKSKFNVLKVGNVEAVVKALNNNPLVEYAEPNYLFNAAWTPNDTYYQGYQYGPQNTYTDYAWDVTKGSSGQEIAVIDTGVDYTHPDLDGKVIKGYDFVDNDYDPMDLNNHGTHVAGIAAAETNNATGIAGMAPNTRILAVRALDRNGSGTLSDIADAIIYAADSGAEVINLSLGCDCHTTTLENAVNYAWNKGSVVVAAAGNNGSSTTFEPASYENVIAVGAVDQYDRLASFSNYGTWVDVVAPGVDIVSTITGNRYAYMSGTSMASPHVAGLAALLASQGRNNIEIRQAIEQTADKISGTGTYFKYGRINSYNAVTY</sequence>
<evidence type="ECO:0000255" key="1"/>
<evidence type="ECO:0000255" key="2">
    <source>
        <dbReference type="PROSITE-ProRule" id="PRU01240"/>
    </source>
</evidence>
<evidence type="ECO:0000269" key="3">
    <source>
    </source>
</evidence>
<evidence type="ECO:0000305" key="4"/>
<evidence type="ECO:0007829" key="5">
    <source>
        <dbReference type="PDB" id="1DBI"/>
    </source>
</evidence>
<keyword id="KW-0002">3D-structure</keyword>
<keyword id="KW-0106">Calcium</keyword>
<keyword id="KW-1015">Disulfide bond</keyword>
<keyword id="KW-0378">Hydrolase</keyword>
<keyword id="KW-0479">Metal-binding</keyword>
<keyword id="KW-0645">Protease</keyword>
<keyword id="KW-0964">Secreted</keyword>
<keyword id="KW-0720">Serine protease</keyword>
<keyword id="KW-0732">Signal</keyword>
<keyword id="KW-0915">Sodium</keyword>
<keyword id="KW-0865">Zymogen</keyword>
<reference key="1">
    <citation type="journal article" date="1994" name="Appl. Environ. Microbiol.">
        <title>Cloning and sequencing of a serine proteinase gene from a thermophilic Bacillus species and its expression in Escherichia coli.</title>
        <authorList>
            <person name="Maciver B."/>
            <person name="McHale R.H."/>
            <person name="Saul D.J."/>
            <person name="Bergquist P.L."/>
        </authorList>
    </citation>
    <scope>NUCLEOTIDE SEQUENCE [GENOMIC DNA]</scope>
</reference>
<reference key="2">
    <citation type="journal article" date="1999" name="J. Mol. Biol.">
        <title>Calcium-mediated thermostability in the subtilisin superfamily: the crystal structure of Bacillus Ak.1 protease at 1.8-A resolution.</title>
        <authorList>
            <person name="Smith C.A."/>
            <person name="Toogood H.S."/>
            <person name="Baker H.M."/>
            <person name="Daniel R.M."/>
            <person name="Baker E.N."/>
        </authorList>
    </citation>
    <scope>X-RAY CRYSTALLOGRAPHY (1.8 ANGSTROMS) OF 122-401</scope>
</reference>
<dbReference type="EC" id="3.4.21.-"/>
<dbReference type="EMBL" id="L29506">
    <property type="protein sequence ID" value="AAA63688.1"/>
    <property type="molecule type" value="Genomic_DNA"/>
</dbReference>
<dbReference type="PIR" id="I39974">
    <property type="entry name" value="I39974"/>
</dbReference>
<dbReference type="PDB" id="1DBI">
    <property type="method" value="X-ray"/>
    <property type="resolution" value="1.80 A"/>
    <property type="chains" value="A=122-401"/>
</dbReference>
<dbReference type="PDBsum" id="1DBI"/>
<dbReference type="SMR" id="Q45670"/>
<dbReference type="MEROPS" id="S08.009"/>
<dbReference type="BRENDA" id="3.4.21.62">
    <property type="organism ID" value="691"/>
</dbReference>
<dbReference type="EvolutionaryTrace" id="Q45670"/>
<dbReference type="GO" id="GO:0005576">
    <property type="term" value="C:extracellular region"/>
    <property type="evidence" value="ECO:0007669"/>
    <property type="project" value="UniProtKB-SubCell"/>
</dbReference>
<dbReference type="GO" id="GO:0046872">
    <property type="term" value="F:metal ion binding"/>
    <property type="evidence" value="ECO:0007669"/>
    <property type="project" value="UniProtKB-KW"/>
</dbReference>
<dbReference type="GO" id="GO:0004252">
    <property type="term" value="F:serine-type endopeptidase activity"/>
    <property type="evidence" value="ECO:0007669"/>
    <property type="project" value="InterPro"/>
</dbReference>
<dbReference type="GO" id="GO:0006508">
    <property type="term" value="P:proteolysis"/>
    <property type="evidence" value="ECO:0007669"/>
    <property type="project" value="UniProtKB-KW"/>
</dbReference>
<dbReference type="CDD" id="cd07484">
    <property type="entry name" value="Peptidases_S8_Thermitase_like"/>
    <property type="match status" value="1"/>
</dbReference>
<dbReference type="Gene3D" id="3.30.70.80">
    <property type="entry name" value="Peptidase S8 propeptide/proteinase inhibitor I9"/>
    <property type="match status" value="1"/>
</dbReference>
<dbReference type="Gene3D" id="3.40.50.200">
    <property type="entry name" value="Peptidase S8/S53 domain"/>
    <property type="match status" value="1"/>
</dbReference>
<dbReference type="InterPro" id="IPR054399">
    <property type="entry name" value="Fervidolysin-like_N_prodom"/>
</dbReference>
<dbReference type="InterPro" id="IPR000209">
    <property type="entry name" value="Peptidase_S8/S53_dom"/>
</dbReference>
<dbReference type="InterPro" id="IPR036852">
    <property type="entry name" value="Peptidase_S8/S53_dom_sf"/>
</dbReference>
<dbReference type="InterPro" id="IPR023827">
    <property type="entry name" value="Peptidase_S8_Asp-AS"/>
</dbReference>
<dbReference type="InterPro" id="IPR022398">
    <property type="entry name" value="Peptidase_S8_His-AS"/>
</dbReference>
<dbReference type="InterPro" id="IPR023828">
    <property type="entry name" value="Peptidase_S8_Ser-AS"/>
</dbReference>
<dbReference type="InterPro" id="IPR050131">
    <property type="entry name" value="Peptidase_S8_subtilisin-like"/>
</dbReference>
<dbReference type="InterPro" id="IPR015500">
    <property type="entry name" value="Peptidase_S8_subtilisin-rel"/>
</dbReference>
<dbReference type="InterPro" id="IPR037045">
    <property type="entry name" value="S8pro/Inhibitor_I9_sf"/>
</dbReference>
<dbReference type="InterPro" id="IPR034084">
    <property type="entry name" value="Thermitase-like_dom"/>
</dbReference>
<dbReference type="PANTHER" id="PTHR43806:SF11">
    <property type="entry name" value="CEREVISIN-RELATED"/>
    <property type="match status" value="1"/>
</dbReference>
<dbReference type="PANTHER" id="PTHR43806">
    <property type="entry name" value="PEPTIDASE S8"/>
    <property type="match status" value="1"/>
</dbReference>
<dbReference type="Pfam" id="PF22148">
    <property type="entry name" value="Fervidolysin_NPro-like"/>
    <property type="match status" value="1"/>
</dbReference>
<dbReference type="Pfam" id="PF00082">
    <property type="entry name" value="Peptidase_S8"/>
    <property type="match status" value="1"/>
</dbReference>
<dbReference type="PRINTS" id="PR00723">
    <property type="entry name" value="SUBTILISIN"/>
</dbReference>
<dbReference type="SUPFAM" id="SSF52743">
    <property type="entry name" value="Subtilisin-like"/>
    <property type="match status" value="1"/>
</dbReference>
<dbReference type="PROSITE" id="PS51892">
    <property type="entry name" value="SUBTILASE"/>
    <property type="match status" value="1"/>
</dbReference>
<dbReference type="PROSITE" id="PS00136">
    <property type="entry name" value="SUBTILASE_ASP"/>
    <property type="match status" value="1"/>
</dbReference>
<dbReference type="PROSITE" id="PS00137">
    <property type="entry name" value="SUBTILASE_HIS"/>
    <property type="match status" value="1"/>
</dbReference>
<dbReference type="PROSITE" id="PS00138">
    <property type="entry name" value="SUBTILASE_SER"/>
    <property type="match status" value="1"/>
</dbReference>
<comment type="cofactor">
    <cofactor evidence="3">
        <name>Ca(2+)</name>
        <dbReference type="ChEBI" id="CHEBI:29108"/>
    </cofactor>
    <text evidence="3">Binds 3 Ca(2+) ions per subunit.</text>
</comment>
<comment type="cofactor">
    <cofactor evidence="3">
        <name>Na(+)</name>
        <dbReference type="ChEBI" id="CHEBI:29101"/>
    </cofactor>
    <text evidence="3">Binds 1 sodium ion per subunit.</text>
</comment>
<comment type="biophysicochemical properties">
    <phDependence>
        <text>Optimum pH is 8.5.</text>
    </phDependence>
    <temperatureDependence>
        <text>Optimum temperature is 75 degrees Celsius.</text>
    </temperatureDependence>
</comment>
<comment type="subcellular location">
    <subcellularLocation>
        <location>Secreted</location>
    </subcellularLocation>
</comment>
<comment type="similarity">
    <text evidence="4">Belongs to the peptidase S8 family.</text>
</comment>
<name>THES_BACSJ</name>
<proteinExistence type="evidence at protein level"/>
<organism>
    <name type="scientific">Bacillus sp. (strain AK1)</name>
    <dbReference type="NCBI Taxonomy" id="268807"/>
    <lineage>
        <taxon>Bacteria</taxon>
        <taxon>Bacillati</taxon>
        <taxon>Bacillota</taxon>
        <taxon>Bacilli</taxon>
        <taxon>Bacillales</taxon>
        <taxon>Bacillaceae</taxon>
        <taxon>Bacillus</taxon>
    </lineage>
</organism>
<accession>Q45670</accession>
<protein>
    <recommendedName>
        <fullName>Thermophilic serine proteinase</fullName>
        <ecNumber>3.4.21.-</ecNumber>
    </recommendedName>
    <alternativeName>
        <fullName>Ak.1 protease</fullName>
    </alternativeName>
</protein>